<feature type="chain" id="PRO_0000385374" description="Serine/threonine-protein kinase sgk-1">
    <location>
        <begin position="1"/>
        <end position="463"/>
    </location>
</feature>
<feature type="domain" description="Protein kinase" evidence="4">
    <location>
        <begin position="135"/>
        <end position="392"/>
    </location>
</feature>
<feature type="domain" description="AGC-kinase C-terminal" evidence="5">
    <location>
        <begin position="393"/>
        <end position="463"/>
    </location>
</feature>
<feature type="active site" description="Proton acceptor" evidence="2 4 6">
    <location>
        <position position="259"/>
    </location>
</feature>
<feature type="binding site" evidence="2 4">
    <location>
        <begin position="141"/>
        <end position="149"/>
    </location>
    <ligand>
        <name>ATP</name>
        <dbReference type="ChEBI" id="CHEBI:30616"/>
    </ligand>
</feature>
<feature type="binding site" evidence="2 4">
    <location>
        <position position="164"/>
    </location>
    <ligand>
        <name>ATP</name>
        <dbReference type="ChEBI" id="CHEBI:30616"/>
    </ligand>
</feature>
<feature type="splice variant" id="VSP_053156" description="In isoform a." evidence="18">
    <location>
        <begin position="1"/>
        <end position="10"/>
    </location>
</feature>
<feature type="mutagenesis site" description="In ft15; suppresses the defect in expression of vit-3 caused by lin-29 mutation." evidence="16">
    <original>E</original>
    <variation>K</variation>
    <location>
        <position position="126"/>
    </location>
</feature>
<feature type="mutagenesis site" description="In mg455; impairs intracellular trafficking of cell membrane receptors. Reduces localization of the cell membrane receptor mig-14 to the basolateral cell membrane and instead mig-14 mis-localizes to late endosomal/early lysosomal structures near the apical cell membrane." evidence="15">
    <location>
        <begin position="286"/>
        <end position="463"/>
    </location>
</feature>
<comment type="function">
    <text evidence="7 8 9 10 12 13 14 15 16">Acts downstream of PI3 kinase age-1 and kinase pdk-1 in the daf-2/insulin receptor-like transduction pathway (PubMed:15068796). Essential role in regulating development, stress response, and longevity (PubMed:15068796, PubMed:18782349). Phosphorylates Forkhead-related daf-16 and the longevity-promoting skn-1 transcription factors, which inhibits their entry into the nucleus and antagonizes their function (PubMed:18358814). Promotes the cytoplasmic localization of the transcription factor pqm-1 (PubMed:27401555). Plays a role in the intracellular trafficking of proteins such as mig-14 to the cell membrane, and this may be through positively regulating ceramide synthesis (PubMed:26115433). Acts downstream of rict-1 to regulate fat storage, size, development and vitellogenesis (PubMed:19240135, PubMed:19260765, PubMed:27401555). Downstream of age-1 and together with akt-1/2, promotes cell survival during embryonic development (PubMed:25383666). Plays a role in maintaining the gonadal basement membrane through antagonizing akt-1 activity (PubMed:22916022). Does not appear to play a role in immune function (PubMed:18782349).</text>
</comment>
<comment type="catalytic activity">
    <reaction evidence="7">
        <text>L-seryl-[protein] + ATP = O-phospho-L-seryl-[protein] + ADP + H(+)</text>
        <dbReference type="Rhea" id="RHEA:17989"/>
        <dbReference type="Rhea" id="RHEA-COMP:9863"/>
        <dbReference type="Rhea" id="RHEA-COMP:11604"/>
        <dbReference type="ChEBI" id="CHEBI:15378"/>
        <dbReference type="ChEBI" id="CHEBI:29999"/>
        <dbReference type="ChEBI" id="CHEBI:30616"/>
        <dbReference type="ChEBI" id="CHEBI:83421"/>
        <dbReference type="ChEBI" id="CHEBI:456216"/>
        <dbReference type="EC" id="2.7.11.1"/>
    </reaction>
</comment>
<comment type="catalytic activity">
    <reaction evidence="7">
        <text>L-threonyl-[protein] + ATP = O-phospho-L-threonyl-[protein] + ADP + H(+)</text>
        <dbReference type="Rhea" id="RHEA:46608"/>
        <dbReference type="Rhea" id="RHEA-COMP:11060"/>
        <dbReference type="Rhea" id="RHEA-COMP:11605"/>
        <dbReference type="ChEBI" id="CHEBI:15378"/>
        <dbReference type="ChEBI" id="CHEBI:30013"/>
        <dbReference type="ChEBI" id="CHEBI:30616"/>
        <dbReference type="ChEBI" id="CHEBI:61977"/>
        <dbReference type="ChEBI" id="CHEBI:456216"/>
        <dbReference type="EC" id="2.7.11.1"/>
    </reaction>
</comment>
<comment type="cofactor">
    <cofactor evidence="7">
        <name>Mg(2+)</name>
        <dbReference type="ChEBI" id="CHEBI:18420"/>
    </cofactor>
</comment>
<comment type="activity regulation">
    <text evidence="7">Phosphorylated and activated by pdk-1.</text>
</comment>
<comment type="subunit">
    <text evidence="7 11">Interacts with pdk-1, akt-1, akt-2 and daf-16 (PubMed:15068796). Part of a complex containing sgk-1, akt-1 and akt-2 (PubMed:15068796). Interacts with let-92 phosphatase regulatory subunit pptr-1 (PubMed:19249087).</text>
</comment>
<comment type="interaction">
    <interactant intactId="EBI-1770776">
        <id>Q2PJ68</id>
    </interactant>
    <interactant intactId="EBI-1770718">
        <id>Q17941</id>
        <label>akt-1</label>
    </interactant>
    <organismsDiffer>false</organismsDiffer>
    <experiments>3</experiments>
</comment>
<comment type="interaction">
    <interactant intactId="EBI-1770776">
        <id>Q2PJ68</id>
    </interactant>
    <interactant intactId="EBI-320656">
        <id>Q9XTG7</id>
        <label>akt-2</label>
    </interactant>
    <organismsDiffer>false</organismsDiffer>
    <experiments>3</experiments>
</comment>
<comment type="interaction">
    <interactant intactId="EBI-1770776">
        <id>Q2PJ68</id>
    </interactant>
    <interactant intactId="EBI-324028">
        <id>O16850</id>
        <label>daf-16</label>
    </interactant>
    <organismsDiffer>false</organismsDiffer>
    <experiments>3</experiments>
</comment>
<comment type="subcellular location">
    <subcellularLocation>
        <location evidence="7 15">Cytoplasm</location>
    </subcellularLocation>
    <subcellularLocation>
        <location evidence="7">Nucleus</location>
    </subcellularLocation>
    <subcellularLocation>
        <location evidence="15">Apical cell membrane</location>
    </subcellularLocation>
    <text evidence="7 15">Localized both in the cytoplasm and in the nucleus in neurons, exclusively cytoplasmic in the intestine. Localizes to the apical cell membrane and diffusely throughout the cytoplasm in intestinal cells (PubMed:26115433).</text>
</comment>
<comment type="alternative products">
    <event type="alternative splicing"/>
    <isoform>
        <id>Q2PJ68-1</id>
        <name evidence="21">b</name>
        <sequence type="displayed"/>
    </isoform>
    <isoform>
        <id>Q2PJ68-2</id>
        <name evidence="20">a</name>
        <sequence type="described" ref="VSP_053156"/>
    </isoform>
</comment>
<comment type="tissue specificity">
    <text evidence="7 11 15">Expressed in late embryos just before hatching. At postembryonic stages, expressed in sensory and motor neurons and in the intestine. Highly expressed in the intestine and head and tail neurons (PubMed:26115433).</text>
</comment>
<comment type="disruption phenotype">
    <text evidence="7 9 10 12 16">A mild developmental delay, extended generation time, an extension of life span, defective egg-laying and decreased body size, but increased lipid storage (PubMed:15068796, PubMed:18782349, PubMed:19240135, PubMed:19260765). RNAi-mediated knockdown abolishes expression of the vitellogenin vit-3 (PubMed:27401555).</text>
</comment>
<comment type="similarity">
    <text evidence="3">Belongs to the protein kinase superfamily. AGC Ser/Thr protein kinase family.</text>
</comment>
<protein>
    <recommendedName>
        <fullName evidence="1 17">Serine/threonine-protein kinase sgk-1</fullName>
        <ecNumber>2.7.11.1</ecNumber>
    </recommendedName>
    <alternativeName>
        <fullName evidence="17">Serum- and glucocorticoid-inducible kinase homolog</fullName>
    </alternativeName>
    <alternativeName>
        <fullName evidence="1">Serum/glucocorticoid-regulated kinase 1</fullName>
    </alternativeName>
</protein>
<sequence>MGSMYYNESRMVRKDEVTCNVIIGDDKKTVVYALRIGNGPIMQKTFEEYERFFTTEKDMIPATIFTAPKKKFLQADSKFYEKRRVWILVISQHLVDNNLRSEDVRRFFHLESPDDDENNVDLGPSERKTATANDFDYLTTIGKGSFGRVYQVRHKETKKIYAMKILSKEHIRKKNEVKHVMAERNVLINNFKHPFLVSLHFSFQNKEKLYFVLDHLNGGELFSHLQREKHFSESRSRFYAAEIACALGYLHEKNIIYRDLKPENLLLDDKGYLVLTDFGLCKEDMQGSKTTSTFCGTPEYLAPEIILKKPYDKTVDWWCLGSVLYEMIFGLPPFYSKDHNEMYDKIINQPLRLKHNISVPCSELITGLLQKDRSKRLGHRNDFRDIRDHPFFLPVDWDKLLNRELKAPFIPKVKNAMDTSNISKEFVEIQIDPSSLAPQQLAVTHRDHDFENFTFVDTNRVLV</sequence>
<name>SGK1_CAEEL</name>
<reference evidence="18 19" key="1">
    <citation type="journal article" date="1998" name="Science">
        <title>Genome sequence of the nematode C. elegans: a platform for investigating biology.</title>
        <authorList>
            <consortium name="The C. elegans sequencing consortium"/>
        </authorList>
    </citation>
    <scope>NUCLEOTIDE SEQUENCE [LARGE SCALE GENOMIC DNA]</scope>
    <source>
        <strain>Bristol N2</strain>
    </source>
</reference>
<reference evidence="18" key="2">
    <citation type="journal article" date="2004" name="Dev. Cell">
        <title>C. elegans SGK-1 is the critical component in the Akt/PKB kinase complex to control stress response and life span.</title>
        <authorList>
            <person name="Hertweck M."/>
            <person name="Goebel C."/>
            <person name="Baumeister R."/>
        </authorList>
    </citation>
    <scope>FUNCTION</scope>
    <scope>ACTIVITY REGULATION</scope>
    <scope>INTERACTION WITH PDK-1; AKT-1; AKT-2 AND DAF-16</scope>
    <scope>SUBCELLULAR LOCATION</scope>
    <scope>TISSUE SPECIFICITY</scope>
    <scope>DISRUPTION PHENOTYPE</scope>
</reference>
<reference evidence="18" key="3">
    <citation type="journal article" date="2008" name="Aging Cell">
        <title>The DAF-2 insulin-like signaling pathway independently regulates aging and immunity in C. elegans.</title>
        <authorList>
            <person name="Evans E.A."/>
            <person name="Chen W.C."/>
            <person name="Tan M.-W."/>
        </authorList>
    </citation>
    <scope>FUNCTION</scope>
    <scope>DISRUPTION PHENOTYPE</scope>
</reference>
<reference evidence="18" key="4">
    <citation type="journal article" date="2008" name="Cell">
        <title>Direct inhibition of the longevity-promoting factor SKN-1 by insulin-like signaling in C. elegans.</title>
        <authorList>
            <person name="Tullet J.M."/>
            <person name="Hertweck M."/>
            <person name="An J.H."/>
            <person name="Baker J."/>
            <person name="Hwang J.Y."/>
            <person name="Liu S."/>
            <person name="Oliveira R.P."/>
            <person name="Baumeister R."/>
            <person name="Blackwell T.K."/>
        </authorList>
    </citation>
    <scope>FUNCTION</scope>
</reference>
<reference key="5">
    <citation type="journal article" date="2009" name="Cell">
        <title>A PP2A regulatory subunit regulates C. elegans insulin/IGF-1 signaling by modulating AKT-1 phosphorylation.</title>
        <authorList>
            <person name="Padmanabhan S."/>
            <person name="Mukhopadhyay A."/>
            <person name="Narasimhan S.D."/>
            <person name="Tesz G."/>
            <person name="Czech M.P."/>
            <person name="Tissenbaum H.A."/>
        </authorList>
    </citation>
    <scope>INTERACTION WITH PPTR-1</scope>
    <scope>TISSUE SPECIFICITY</scope>
</reference>
<reference key="6">
    <citation type="journal article" date="2009" name="Genes Dev.">
        <title>Rictor/TORC2 regulates fat metabolism, feeding, growth, and life span in Caenorhabditis elegans.</title>
        <authorList>
            <person name="Soukas A.A."/>
            <person name="Kane E.A."/>
            <person name="Carr C.E."/>
            <person name="Melo J.A."/>
            <person name="Ruvkun G."/>
        </authorList>
    </citation>
    <scope>FUNCTION</scope>
    <scope>DISRUPTION PHENOTYPE</scope>
</reference>
<reference key="7">
    <citation type="journal article" date="2009" name="PLoS Biol.">
        <title>Rictor/TORC2 regulates Caenorhabditis elegans fat storage, body size, and development through sgk-1.</title>
        <authorList>
            <person name="Jones K.T."/>
            <person name="Greer E.R."/>
            <person name="Pearce D."/>
            <person name="Ashrafi K."/>
        </authorList>
    </citation>
    <scope>FUNCTION</scope>
    <scope>DISRUPTION PHENOTYPE</scope>
</reference>
<reference key="8">
    <citation type="journal article" date="2012" name="PLoS Genet.">
        <title>Cell-nonautonomous signaling of FOXO/DAF-16 to the stem cells of Caenorhabditis elegans.</title>
        <authorList>
            <person name="Qi W."/>
            <person name="Huang X."/>
            <person name="Neumann-Haefelin E."/>
            <person name="Schulze E."/>
            <person name="Baumeister R."/>
        </authorList>
    </citation>
    <scope>FUNCTION</scope>
</reference>
<reference key="9">
    <citation type="journal article" date="2014" name="Nat. Struct. Mol. Biol.">
        <title>Caspase-activated phosphoinositide binding by CNT-1 promotes apoptosis by inhibiting the AKT pathway.</title>
        <authorList>
            <person name="Nakagawa A."/>
            <person name="Sullivan K.D."/>
            <person name="Xue D."/>
        </authorList>
    </citation>
    <scope>FUNCTION</scope>
</reference>
<reference key="10">
    <citation type="journal article" date="2015" name="PLoS ONE">
        <title>Serum- and Glucocorticoid-Inducible Kinase-1 (SGK-1) Plays a Role in Membrane Trafficking in Caenorhabditis elegans.</title>
        <authorList>
            <person name="Zhu M."/>
            <person name="Wu G."/>
            <person name="Li Y.X."/>
            <person name="Stevens J.K."/>
            <person name="Fan C.X."/>
            <person name="Spang A."/>
            <person name="Dong M.Q."/>
        </authorList>
    </citation>
    <scope>FUNCTION</scope>
    <scope>SUBCELLULAR LOCATION</scope>
    <scope>TISSUE SPECIFICITY</scope>
    <scope>MUTAGENESIS OF 286-GLN--VAL-463</scope>
</reference>
<reference key="11">
    <citation type="journal article" date="2016" name="Genes Dev.">
        <title>A microRNA program in the C. elegans hypodermis couples to intestinal mTORC2/PQM-1 signaling to modulate fat transport.</title>
        <authorList>
            <person name="Dowen R.H."/>
            <person name="Breen P.C."/>
            <person name="Tullius T."/>
            <person name="Conery A.L."/>
            <person name="Ruvkun G."/>
        </authorList>
    </citation>
    <scope>FUNCTION</scope>
    <scope>DISRUPTION PHENOTYPE</scope>
    <scope>MUTAGENESIS OF GLU-126</scope>
</reference>
<reference key="12">
    <citation type="journal article" date="2016" name="PLoS ONE">
        <title>Correction: Serum- and Glucocorticoid-Inducible Kinase-1 (SGK-1) Plays a Role in Membrane Trafficking in Caenorhabditis elegans.</title>
        <authorList>
            <person name="Zhu M."/>
            <person name="Wu G."/>
            <person name="Li Y.X."/>
            <person name="Stevens J.K."/>
            <person name="Fan C.X."/>
            <person name="Spang A."/>
            <person name="Dong M.Q."/>
        </authorList>
    </citation>
    <scope>ERRATUM OF PUBMED:27401555</scope>
</reference>
<keyword id="KW-0025">Alternative splicing</keyword>
<keyword id="KW-0067">ATP-binding</keyword>
<keyword id="KW-1003">Cell membrane</keyword>
<keyword id="KW-0963">Cytoplasm</keyword>
<keyword id="KW-0217">Developmental protein</keyword>
<keyword id="KW-0418">Kinase</keyword>
<keyword id="KW-0460">Magnesium</keyword>
<keyword id="KW-0472">Membrane</keyword>
<keyword id="KW-0479">Metal-binding</keyword>
<keyword id="KW-0547">Nucleotide-binding</keyword>
<keyword id="KW-0539">Nucleus</keyword>
<keyword id="KW-0597">Phosphoprotein</keyword>
<keyword id="KW-1185">Reference proteome</keyword>
<keyword id="KW-0723">Serine/threonine-protein kinase</keyword>
<keyword id="KW-0346">Stress response</keyword>
<keyword id="KW-0808">Transferase</keyword>
<organism>
    <name type="scientific">Caenorhabditis elegans</name>
    <dbReference type="NCBI Taxonomy" id="6239"/>
    <lineage>
        <taxon>Eukaryota</taxon>
        <taxon>Metazoa</taxon>
        <taxon>Ecdysozoa</taxon>
        <taxon>Nematoda</taxon>
        <taxon>Chromadorea</taxon>
        <taxon>Rhabditida</taxon>
        <taxon>Rhabditina</taxon>
        <taxon>Rhabditomorpha</taxon>
        <taxon>Rhabditoidea</taxon>
        <taxon>Rhabditidae</taxon>
        <taxon>Peloderinae</taxon>
        <taxon>Caenorhabditis</taxon>
    </lineage>
</organism>
<evidence type="ECO:0000250" key="1">
    <source>
        <dbReference type="UniProtKB" id="O00141"/>
    </source>
</evidence>
<evidence type="ECO:0000250" key="2">
    <source>
        <dbReference type="UniProtKB" id="P28523"/>
    </source>
</evidence>
<evidence type="ECO:0000255" key="3"/>
<evidence type="ECO:0000255" key="4">
    <source>
        <dbReference type="PROSITE-ProRule" id="PRU00159"/>
    </source>
</evidence>
<evidence type="ECO:0000255" key="5">
    <source>
        <dbReference type="PROSITE-ProRule" id="PRU00618"/>
    </source>
</evidence>
<evidence type="ECO:0000255" key="6">
    <source>
        <dbReference type="PROSITE-ProRule" id="PRU10027"/>
    </source>
</evidence>
<evidence type="ECO:0000269" key="7">
    <source>
    </source>
</evidence>
<evidence type="ECO:0000269" key="8">
    <source>
    </source>
</evidence>
<evidence type="ECO:0000269" key="9">
    <source>
    </source>
</evidence>
<evidence type="ECO:0000269" key="10">
    <source>
    </source>
</evidence>
<evidence type="ECO:0000269" key="11">
    <source>
    </source>
</evidence>
<evidence type="ECO:0000269" key="12">
    <source>
    </source>
</evidence>
<evidence type="ECO:0000269" key="13">
    <source>
    </source>
</evidence>
<evidence type="ECO:0000269" key="14">
    <source>
    </source>
</evidence>
<evidence type="ECO:0000269" key="15">
    <source>
    </source>
</evidence>
<evidence type="ECO:0000269" key="16">
    <source>
    </source>
</evidence>
<evidence type="ECO:0000303" key="17">
    <source>
    </source>
</evidence>
<evidence type="ECO:0000305" key="18"/>
<evidence type="ECO:0000312" key="19">
    <source>
        <dbReference type="EMBL" id="CAJ55247.1"/>
    </source>
</evidence>
<evidence type="ECO:0000312" key="20">
    <source>
        <dbReference type="WormBase" id="W10G6.2a"/>
    </source>
</evidence>
<evidence type="ECO:0000312" key="21">
    <source>
        <dbReference type="WormBase" id="W10G6.2b"/>
    </source>
</evidence>
<dbReference type="EC" id="2.7.11.1"/>
<dbReference type="EMBL" id="BX284606">
    <property type="protein sequence ID" value="CAJ55246.1"/>
    <property type="molecule type" value="Genomic_DNA"/>
</dbReference>
<dbReference type="EMBL" id="BX284606">
    <property type="protein sequence ID" value="CAJ55247.1"/>
    <property type="molecule type" value="Genomic_DNA"/>
</dbReference>
<dbReference type="RefSeq" id="NP_001041298.1">
    <property type="nucleotide sequence ID" value="NM_001047833.4"/>
</dbReference>
<dbReference type="RefSeq" id="NP_001041299.1">
    <molecule id="Q2PJ68-1"/>
    <property type="nucleotide sequence ID" value="NM_001047834.4"/>
</dbReference>
<dbReference type="RefSeq" id="NP_001367134.1">
    <molecule id="Q2PJ68-2"/>
    <property type="nucleotide sequence ID" value="NM_001381177.2"/>
</dbReference>
<dbReference type="SMR" id="Q2PJ68"/>
<dbReference type="BioGRID" id="46583">
    <property type="interactions" value="23"/>
</dbReference>
<dbReference type="ComplexPortal" id="CPX-1129">
    <property type="entry name" value="Atk-1/Akt-2/Sgk-1 protein kinase complex"/>
</dbReference>
<dbReference type="FunCoup" id="Q2PJ68">
    <property type="interactions" value="1353"/>
</dbReference>
<dbReference type="IntAct" id="Q2PJ68">
    <property type="interactions" value="6"/>
</dbReference>
<dbReference type="STRING" id="6239.W10G6.2b.1"/>
<dbReference type="PaxDb" id="6239-W10G6.2b"/>
<dbReference type="PeptideAtlas" id="Q2PJ68"/>
<dbReference type="EnsemblMetazoa" id="W10G6.2a.1">
    <molecule id="Q2PJ68-2"/>
    <property type="protein sequence ID" value="W10G6.2a.1"/>
    <property type="gene ID" value="WBGene00004789"/>
</dbReference>
<dbReference type="EnsemblMetazoa" id="W10G6.2a.2">
    <molecule id="Q2PJ68-2"/>
    <property type="protein sequence ID" value="W10G6.2a.2"/>
    <property type="gene ID" value="WBGene00004789"/>
</dbReference>
<dbReference type="EnsemblMetazoa" id="W10G6.2b.1">
    <molecule id="Q2PJ68-1"/>
    <property type="protein sequence ID" value="W10G6.2b.1"/>
    <property type="gene ID" value="WBGene00004789"/>
</dbReference>
<dbReference type="GeneID" id="181697"/>
<dbReference type="KEGG" id="cel:CELE_W10G6.2"/>
<dbReference type="UCSC" id="W10G6.2a.1">
    <property type="organism name" value="c. elegans"/>
</dbReference>
<dbReference type="AGR" id="WB:WBGene00004789"/>
<dbReference type="CTD" id="181697"/>
<dbReference type="WormBase" id="W10G6.2a">
    <molecule id="Q2PJ68-2"/>
    <property type="protein sequence ID" value="CE39527"/>
    <property type="gene ID" value="WBGene00004789"/>
    <property type="gene designation" value="sgk-1"/>
</dbReference>
<dbReference type="WormBase" id="W10G6.2b">
    <molecule id="Q2PJ68-1"/>
    <property type="protein sequence ID" value="CE39528"/>
    <property type="gene ID" value="WBGene00004789"/>
    <property type="gene designation" value="sgk-1"/>
</dbReference>
<dbReference type="eggNOG" id="KOG0598">
    <property type="taxonomic scope" value="Eukaryota"/>
</dbReference>
<dbReference type="GeneTree" id="ENSGT00940000153776"/>
<dbReference type="InParanoid" id="Q2PJ68"/>
<dbReference type="OMA" id="CVIYDMM"/>
<dbReference type="OrthoDB" id="63267at2759"/>
<dbReference type="PhylomeDB" id="Q2PJ68"/>
<dbReference type="Reactome" id="R-CEL-1257604">
    <property type="pathway name" value="PIP3 activates AKT signaling"/>
</dbReference>
<dbReference type="Reactome" id="R-CEL-2672351">
    <property type="pathway name" value="Stimuli-sensing channels"/>
</dbReference>
<dbReference type="Reactome" id="R-CEL-6804757">
    <property type="pathway name" value="Regulation of TP53 Degradation"/>
</dbReference>
<dbReference type="Reactome" id="R-CEL-9031628">
    <property type="pathway name" value="NGF-stimulated transcription"/>
</dbReference>
<dbReference type="SignaLink" id="Q2PJ68"/>
<dbReference type="PRO" id="PR:Q2PJ68"/>
<dbReference type="Proteomes" id="UP000001940">
    <property type="component" value="Chromosome X"/>
</dbReference>
<dbReference type="Bgee" id="WBGene00004789">
    <property type="expression patterns" value="Expressed in larva and 4 other cell types or tissues"/>
</dbReference>
<dbReference type="GO" id="GO:0016324">
    <property type="term" value="C:apical plasma membrane"/>
    <property type="evidence" value="ECO:0007669"/>
    <property type="project" value="UniProtKB-SubCell"/>
</dbReference>
<dbReference type="GO" id="GO:0005737">
    <property type="term" value="C:cytoplasm"/>
    <property type="evidence" value="ECO:0000314"/>
    <property type="project" value="WormBase"/>
</dbReference>
<dbReference type="GO" id="GO:0005634">
    <property type="term" value="C:nucleus"/>
    <property type="evidence" value="ECO:0000314"/>
    <property type="project" value="WormBase"/>
</dbReference>
<dbReference type="GO" id="GO:1902911">
    <property type="term" value="C:protein kinase complex"/>
    <property type="evidence" value="ECO:0000353"/>
    <property type="project" value="ComplexPortal"/>
</dbReference>
<dbReference type="GO" id="GO:0005524">
    <property type="term" value="F:ATP binding"/>
    <property type="evidence" value="ECO:0007669"/>
    <property type="project" value="UniProtKB-KW"/>
</dbReference>
<dbReference type="GO" id="GO:0046872">
    <property type="term" value="F:metal ion binding"/>
    <property type="evidence" value="ECO:0007669"/>
    <property type="project" value="UniProtKB-KW"/>
</dbReference>
<dbReference type="GO" id="GO:0005547">
    <property type="term" value="F:phosphatidylinositol-3,4,5-trisphosphate binding"/>
    <property type="evidence" value="ECO:0000314"/>
    <property type="project" value="WormBase"/>
</dbReference>
<dbReference type="GO" id="GO:0106310">
    <property type="term" value="F:protein serine kinase activity"/>
    <property type="evidence" value="ECO:0007669"/>
    <property type="project" value="RHEA"/>
</dbReference>
<dbReference type="GO" id="GO:0004674">
    <property type="term" value="F:protein serine/threonine kinase activity"/>
    <property type="evidence" value="ECO:0000314"/>
    <property type="project" value="WormBase"/>
</dbReference>
<dbReference type="GO" id="GO:0035556">
    <property type="term" value="P:intracellular signal transduction"/>
    <property type="evidence" value="ECO:0000318"/>
    <property type="project" value="GO_Central"/>
</dbReference>
<dbReference type="GO" id="GO:0006629">
    <property type="term" value="P:lipid metabolic process"/>
    <property type="evidence" value="ECO:0000315"/>
    <property type="project" value="UniProtKB"/>
</dbReference>
<dbReference type="GO" id="GO:0048382">
    <property type="term" value="P:mesendoderm development"/>
    <property type="evidence" value="ECO:0000316"/>
    <property type="project" value="WormBase"/>
</dbReference>
<dbReference type="GO" id="GO:0002119">
    <property type="term" value="P:nematode larval development"/>
    <property type="evidence" value="ECO:0000315"/>
    <property type="project" value="WormBase"/>
</dbReference>
<dbReference type="GO" id="GO:1903188">
    <property type="term" value="P:positive regulation of vitellogenesis"/>
    <property type="evidence" value="ECO:0000315"/>
    <property type="project" value="UniProtKB"/>
</dbReference>
<dbReference type="GO" id="GO:0010468">
    <property type="term" value="P:regulation of gene expression"/>
    <property type="evidence" value="ECO:0000314"/>
    <property type="project" value="ComplexPortal"/>
</dbReference>
<dbReference type="GO" id="GO:1904508">
    <property type="term" value="P:regulation of protein localization to basolateral plasma membrane"/>
    <property type="evidence" value="ECO:0000315"/>
    <property type="project" value="WormBase"/>
</dbReference>
<dbReference type="CDD" id="cd05575">
    <property type="entry name" value="STKc_SGK"/>
    <property type="match status" value="1"/>
</dbReference>
<dbReference type="FunFam" id="1.10.510.10:FF:000008">
    <property type="entry name" value="Non-specific serine/threonine protein kinase"/>
    <property type="match status" value="1"/>
</dbReference>
<dbReference type="FunFam" id="3.30.200.20:FF:000681">
    <property type="entry name" value="Non-specific serine/threonine protein kinase"/>
    <property type="match status" value="1"/>
</dbReference>
<dbReference type="Gene3D" id="3.30.200.20">
    <property type="entry name" value="Phosphorylase Kinase, domain 1"/>
    <property type="match status" value="1"/>
</dbReference>
<dbReference type="Gene3D" id="1.10.510.10">
    <property type="entry name" value="Transferase(Phosphotransferase) domain 1"/>
    <property type="match status" value="1"/>
</dbReference>
<dbReference type="InterPro" id="IPR000961">
    <property type="entry name" value="AGC-kinase_C"/>
</dbReference>
<dbReference type="InterPro" id="IPR011009">
    <property type="entry name" value="Kinase-like_dom_sf"/>
</dbReference>
<dbReference type="InterPro" id="IPR000719">
    <property type="entry name" value="Prot_kinase_dom"/>
</dbReference>
<dbReference type="InterPro" id="IPR017441">
    <property type="entry name" value="Protein_kinase_ATP_BS"/>
</dbReference>
<dbReference type="InterPro" id="IPR008271">
    <property type="entry name" value="Ser/Thr_kinase_AS"/>
</dbReference>
<dbReference type="PANTHER" id="PTHR24351">
    <property type="entry name" value="RIBOSOMAL PROTEIN S6 KINASE"/>
    <property type="match status" value="1"/>
</dbReference>
<dbReference type="Pfam" id="PF00069">
    <property type="entry name" value="Pkinase"/>
    <property type="match status" value="1"/>
</dbReference>
<dbReference type="SMART" id="SM00133">
    <property type="entry name" value="S_TK_X"/>
    <property type="match status" value="1"/>
</dbReference>
<dbReference type="SMART" id="SM00220">
    <property type="entry name" value="S_TKc"/>
    <property type="match status" value="1"/>
</dbReference>
<dbReference type="SUPFAM" id="SSF56112">
    <property type="entry name" value="Protein kinase-like (PK-like)"/>
    <property type="match status" value="1"/>
</dbReference>
<dbReference type="PROSITE" id="PS51285">
    <property type="entry name" value="AGC_KINASE_CTER"/>
    <property type="match status" value="1"/>
</dbReference>
<dbReference type="PROSITE" id="PS00107">
    <property type="entry name" value="PROTEIN_KINASE_ATP"/>
    <property type="match status" value="1"/>
</dbReference>
<dbReference type="PROSITE" id="PS50011">
    <property type="entry name" value="PROTEIN_KINASE_DOM"/>
    <property type="match status" value="1"/>
</dbReference>
<dbReference type="PROSITE" id="PS00108">
    <property type="entry name" value="PROTEIN_KINASE_ST"/>
    <property type="match status" value="1"/>
</dbReference>
<accession>Q2PJ68</accession>
<accession>Q2PJ69</accession>
<gene>
    <name evidence="21" type="primary">sgk-1</name>
    <name evidence="21" type="ORF">W10G6.2</name>
</gene>
<proteinExistence type="evidence at protein level"/>